<accession>Q0PCS3</accession>
<accession>F4JB43</accession>
<accession>Q9LJK7</accession>
<dbReference type="EC" id="3.6.4.-"/>
<dbReference type="EMBL" id="AB250666">
    <property type="protein sequence ID" value="BAF03042.1"/>
    <property type="molecule type" value="mRNA"/>
</dbReference>
<dbReference type="EMBL" id="DQ912973">
    <property type="protein sequence ID" value="ABJ99465.1"/>
    <property type="molecule type" value="mRNA"/>
</dbReference>
<dbReference type="EMBL" id="AP000419">
    <property type="protein sequence ID" value="BAB02963.1"/>
    <property type="status" value="ALT_SEQ"/>
    <property type="molecule type" value="Genomic_DNA"/>
</dbReference>
<dbReference type="EMBL" id="CP002686">
    <property type="protein sequence ID" value="AEE76208.1"/>
    <property type="molecule type" value="Genomic_DNA"/>
</dbReference>
<dbReference type="EMBL" id="CP002686">
    <property type="protein sequence ID" value="AEE76209.1"/>
    <property type="molecule type" value="Genomic_DNA"/>
</dbReference>
<dbReference type="RefSeq" id="NP_001189933.1">
    <molecule id="Q0PCS3-2"/>
    <property type="nucleotide sequence ID" value="NM_001203004.1"/>
</dbReference>
<dbReference type="RefSeq" id="NP_188552.3">
    <molecule id="Q0PCS3-1"/>
    <property type="nucleotide sequence ID" value="NM_112808.4"/>
</dbReference>
<dbReference type="SMR" id="Q0PCS3"/>
<dbReference type="BioGRID" id="6788">
    <property type="interactions" value="5"/>
</dbReference>
<dbReference type="FunCoup" id="Q0PCS3">
    <property type="interactions" value="2281"/>
</dbReference>
<dbReference type="IntAct" id="Q0PCS3">
    <property type="interactions" value="4"/>
</dbReference>
<dbReference type="STRING" id="3702.Q0PCS3"/>
<dbReference type="iPTMnet" id="Q0PCS3"/>
<dbReference type="PaxDb" id="3702-AT3G19210.1"/>
<dbReference type="ProteomicsDB" id="247002">
    <molecule id="Q0PCS3-1"/>
</dbReference>
<dbReference type="EnsemblPlants" id="AT3G19210.1">
    <molecule id="Q0PCS3-1"/>
    <property type="protein sequence ID" value="AT3G19210.1"/>
    <property type="gene ID" value="AT3G19210"/>
</dbReference>
<dbReference type="EnsemblPlants" id="AT3G19210.2">
    <molecule id="Q0PCS3-2"/>
    <property type="protein sequence ID" value="AT3G19210.2"/>
    <property type="gene ID" value="AT3G19210"/>
</dbReference>
<dbReference type="GeneID" id="821455"/>
<dbReference type="Gramene" id="AT3G19210.1">
    <molecule id="Q0PCS3-1"/>
    <property type="protein sequence ID" value="AT3G19210.1"/>
    <property type="gene ID" value="AT3G19210"/>
</dbReference>
<dbReference type="Gramene" id="AT3G19210.2">
    <molecule id="Q0PCS3-2"/>
    <property type="protein sequence ID" value="AT3G19210.2"/>
    <property type="gene ID" value="AT3G19210"/>
</dbReference>
<dbReference type="KEGG" id="ath:AT3G19210"/>
<dbReference type="Araport" id="AT3G19210"/>
<dbReference type="TAIR" id="AT3G19210">
    <property type="gene designation" value="RAD54"/>
</dbReference>
<dbReference type="eggNOG" id="KOG0390">
    <property type="taxonomic scope" value="Eukaryota"/>
</dbReference>
<dbReference type="HOGENOM" id="CLU_000315_10_4_1"/>
<dbReference type="InParanoid" id="Q0PCS3"/>
<dbReference type="OrthoDB" id="413460at2759"/>
<dbReference type="PhylomeDB" id="Q0PCS3"/>
<dbReference type="PRO" id="PR:Q0PCS3"/>
<dbReference type="Proteomes" id="UP000006548">
    <property type="component" value="Chromosome 3"/>
</dbReference>
<dbReference type="ExpressionAtlas" id="Q0PCS3">
    <property type="expression patterns" value="baseline and differential"/>
</dbReference>
<dbReference type="GO" id="GO:0005634">
    <property type="term" value="C:nucleus"/>
    <property type="evidence" value="ECO:0007669"/>
    <property type="project" value="UniProtKB-SubCell"/>
</dbReference>
<dbReference type="GO" id="GO:0005524">
    <property type="term" value="F:ATP binding"/>
    <property type="evidence" value="ECO:0007669"/>
    <property type="project" value="UniProtKB-KW"/>
</dbReference>
<dbReference type="GO" id="GO:0003677">
    <property type="term" value="F:DNA binding"/>
    <property type="evidence" value="ECO:0007669"/>
    <property type="project" value="UniProtKB-KW"/>
</dbReference>
<dbReference type="GO" id="GO:0004386">
    <property type="term" value="F:helicase activity"/>
    <property type="evidence" value="ECO:0007669"/>
    <property type="project" value="UniProtKB-KW"/>
</dbReference>
<dbReference type="GO" id="GO:0016787">
    <property type="term" value="F:hydrolase activity"/>
    <property type="evidence" value="ECO:0007669"/>
    <property type="project" value="UniProtKB-KW"/>
</dbReference>
<dbReference type="GO" id="GO:0051701">
    <property type="term" value="P:biological process involved in interaction with host"/>
    <property type="evidence" value="ECO:0000353"/>
    <property type="project" value="UniProtKB"/>
</dbReference>
<dbReference type="GO" id="GO:0051301">
    <property type="term" value="P:cell division"/>
    <property type="evidence" value="ECO:0007669"/>
    <property type="project" value="UniProtKB-KW"/>
</dbReference>
<dbReference type="GO" id="GO:0071480">
    <property type="term" value="P:cellular response to gamma radiation"/>
    <property type="evidence" value="ECO:0000270"/>
    <property type="project" value="UniProtKB"/>
</dbReference>
<dbReference type="GO" id="GO:0071248">
    <property type="term" value="P:cellular response to metal ion"/>
    <property type="evidence" value="ECO:0000270"/>
    <property type="project" value="UniProtKB"/>
</dbReference>
<dbReference type="GO" id="GO:0000724">
    <property type="term" value="P:double-strand break repair via homologous recombination"/>
    <property type="evidence" value="ECO:0000315"/>
    <property type="project" value="TAIR"/>
</dbReference>
<dbReference type="GO" id="GO:0045003">
    <property type="term" value="P:double-strand break repair via synthesis-dependent strand annealing"/>
    <property type="evidence" value="ECO:0000314"/>
    <property type="project" value="TAIR"/>
</dbReference>
<dbReference type="GO" id="GO:0010332">
    <property type="term" value="P:response to gamma radiation"/>
    <property type="evidence" value="ECO:0000270"/>
    <property type="project" value="TAIR"/>
</dbReference>
<dbReference type="CDD" id="cd18004">
    <property type="entry name" value="DEXHc_RAD54"/>
    <property type="match status" value="1"/>
</dbReference>
<dbReference type="CDD" id="cd18793">
    <property type="entry name" value="SF2_C_SNF"/>
    <property type="match status" value="1"/>
</dbReference>
<dbReference type="FunFam" id="3.40.50.10810:FF:000021">
    <property type="entry name" value="DNA repair and recombination protein RAD54"/>
    <property type="match status" value="1"/>
</dbReference>
<dbReference type="FunFam" id="3.40.50.300:FF:000332">
    <property type="entry name" value="DNA repair and recombination protein RAD54-like"/>
    <property type="match status" value="1"/>
</dbReference>
<dbReference type="FunFam" id="1.20.120.850:FF:000028">
    <property type="entry name" value="Predicted protein"/>
    <property type="match status" value="1"/>
</dbReference>
<dbReference type="Gene3D" id="3.40.50.300">
    <property type="entry name" value="P-loop containing nucleotide triphosphate hydrolases"/>
    <property type="match status" value="1"/>
</dbReference>
<dbReference type="Gene3D" id="1.20.120.850">
    <property type="entry name" value="SWI2/SNF2 ATPases, N-terminal domain"/>
    <property type="match status" value="1"/>
</dbReference>
<dbReference type="Gene3D" id="3.40.50.10810">
    <property type="entry name" value="Tandem AAA-ATPase domain"/>
    <property type="match status" value="1"/>
</dbReference>
<dbReference type="InterPro" id="IPR014001">
    <property type="entry name" value="Helicase_ATP-bd"/>
</dbReference>
<dbReference type="InterPro" id="IPR001650">
    <property type="entry name" value="Helicase_C-like"/>
</dbReference>
<dbReference type="InterPro" id="IPR027417">
    <property type="entry name" value="P-loop_NTPase"/>
</dbReference>
<dbReference type="InterPro" id="IPR038718">
    <property type="entry name" value="SNF2-like_sf"/>
</dbReference>
<dbReference type="InterPro" id="IPR049730">
    <property type="entry name" value="SNF2/RAD54-like_C"/>
</dbReference>
<dbReference type="InterPro" id="IPR000330">
    <property type="entry name" value="SNF2_N"/>
</dbReference>
<dbReference type="InterPro" id="IPR050496">
    <property type="entry name" value="SNF2_RAD54_helicase_repair"/>
</dbReference>
<dbReference type="PANTHER" id="PTHR45629:SF7">
    <property type="entry name" value="DNA EXCISION REPAIR PROTEIN ERCC-6-RELATED"/>
    <property type="match status" value="1"/>
</dbReference>
<dbReference type="PANTHER" id="PTHR45629">
    <property type="entry name" value="SNF2/RAD54 FAMILY MEMBER"/>
    <property type="match status" value="1"/>
</dbReference>
<dbReference type="Pfam" id="PF00271">
    <property type="entry name" value="Helicase_C"/>
    <property type="match status" value="1"/>
</dbReference>
<dbReference type="Pfam" id="PF00176">
    <property type="entry name" value="SNF2-rel_dom"/>
    <property type="match status" value="1"/>
</dbReference>
<dbReference type="SMART" id="SM00487">
    <property type="entry name" value="DEXDc"/>
    <property type="match status" value="1"/>
</dbReference>
<dbReference type="SMART" id="SM00490">
    <property type="entry name" value="HELICc"/>
    <property type="match status" value="1"/>
</dbReference>
<dbReference type="SUPFAM" id="SSF52540">
    <property type="entry name" value="P-loop containing nucleoside triphosphate hydrolases"/>
    <property type="match status" value="2"/>
</dbReference>
<dbReference type="PROSITE" id="PS51192">
    <property type="entry name" value="HELICASE_ATP_BIND_1"/>
    <property type="match status" value="1"/>
</dbReference>
<dbReference type="PROSITE" id="PS51194">
    <property type="entry name" value="HELICASE_CTER"/>
    <property type="match status" value="1"/>
</dbReference>
<organism evidence="18">
    <name type="scientific">Arabidopsis thaliana</name>
    <name type="common">Mouse-ear cress</name>
    <dbReference type="NCBI Taxonomy" id="3702"/>
    <lineage>
        <taxon>Eukaryota</taxon>
        <taxon>Viridiplantae</taxon>
        <taxon>Streptophyta</taxon>
        <taxon>Embryophyta</taxon>
        <taxon>Tracheophyta</taxon>
        <taxon>Spermatophyta</taxon>
        <taxon>Magnoliopsida</taxon>
        <taxon>eudicotyledons</taxon>
        <taxon>Gunneridae</taxon>
        <taxon>Pentapetalae</taxon>
        <taxon>rosids</taxon>
        <taxon>malvids</taxon>
        <taxon>Brassicales</taxon>
        <taxon>Brassicaceae</taxon>
        <taxon>Camelineae</taxon>
        <taxon>Arabidopsis</taxon>
    </lineage>
</organism>
<name>CHR25_ARATH</name>
<feature type="chain" id="PRO_0000430859" description="Protein CHROMATIN REMODELING 25">
    <location>
        <begin position="1"/>
        <end position="910"/>
    </location>
</feature>
<feature type="domain" description="Helicase ATP-binding" evidence="3">
    <location>
        <begin position="198"/>
        <end position="371"/>
    </location>
</feature>
<feature type="domain" description="Helicase C-terminal" evidence="4">
    <location>
        <begin position="538"/>
        <end position="696"/>
    </location>
</feature>
<feature type="region of interest" description="Disordered" evidence="5">
    <location>
        <begin position="1"/>
        <end position="39"/>
    </location>
</feature>
<feature type="region of interest" description="Disordered" evidence="5">
    <location>
        <begin position="828"/>
        <end position="861"/>
    </location>
</feature>
<feature type="coiled-coil region" evidence="2">
    <location>
        <begin position="396"/>
        <end position="417"/>
    </location>
</feature>
<feature type="short sequence motif" description="DEAH box" evidence="3">
    <location>
        <begin position="322"/>
        <end position="325"/>
    </location>
</feature>
<feature type="compositionally biased region" description="Acidic residues" evidence="5">
    <location>
        <begin position="1"/>
        <end position="18"/>
    </location>
</feature>
<feature type="compositionally biased region" description="Acidic residues" evidence="5">
    <location>
        <begin position="26"/>
        <end position="39"/>
    </location>
</feature>
<feature type="binding site" evidence="3">
    <location>
        <begin position="211"/>
        <end position="218"/>
    </location>
    <ligand>
        <name>ATP</name>
        <dbReference type="ChEBI" id="CHEBI:30616"/>
    </ligand>
</feature>
<feature type="splice variant" id="VSP_057104" description="In isoform 2.">
    <original>STLYNHFISSKN</original>
    <variation>TTYNGCLCMQ</variation>
    <location>
        <begin position="447"/>
        <end position="458"/>
    </location>
</feature>
<proteinExistence type="evidence at protein level"/>
<protein>
    <recommendedName>
        <fullName>Protein CHROMATIN REMODELING 25</fullName>
        <shortName>AtCHR25</shortName>
        <ecNumber>3.6.4.-</ecNumber>
    </recommendedName>
    <alternativeName>
        <fullName evidence="14">DNA repair and recombination protein RAD54</fullName>
        <shortName evidence="14">AtRAD54</shortName>
    </alternativeName>
</protein>
<reference key="1">
    <citation type="journal article" date="2006" name="Plant J.">
        <title>Isolation and characterization of the RAD54 gene from Arabidopsis thaliana.</title>
        <authorList>
            <person name="Osakabe K."/>
            <person name="Abe K."/>
            <person name="Yoshioka T."/>
            <person name="Osakabe Y."/>
            <person name="Todoriki S."/>
            <person name="Ichikawa H."/>
            <person name="Hohn B."/>
            <person name="Toki S."/>
        </authorList>
    </citation>
    <scope>NUCLEOTIDE SEQUENCE [MRNA] (ISOFORM 1)</scope>
    <scope>FUNCTION</scope>
    <scope>DISRUPTION PHENOTYPE</scope>
    <scope>INTERACTION WITH RAD51</scope>
    <scope>TISSUE SPECIFICITY</scope>
    <scope>INDUCTION BY GAMMA-IRRADIATION</scope>
    <source>
        <strain>cv. Columbia</strain>
        <tissue>Flower bud</tissue>
    </source>
</reference>
<reference key="2">
    <citation type="journal article" date="2008" name="Genetics">
        <title>Functional conservation of the yeast and Arabidopsis RAD54-like genes.</title>
        <authorList>
            <person name="Klutstein M."/>
            <person name="Shaked H."/>
            <person name="Sherman A."/>
            <person name="Avivi-Ragolsky N."/>
            <person name="Shema E."/>
            <person name="Zenvirth D."/>
            <person name="Levy A.A."/>
            <person name="Simchen G."/>
        </authorList>
    </citation>
    <scope>NUCLEOTIDE SEQUENCE [MRNA] (ISOFORM 1)</scope>
    <scope>FUNCTION</scope>
    <scope>INTERACTION WITH RAD51</scope>
</reference>
<reference key="3">
    <citation type="journal article" date="2000" name="DNA Res.">
        <title>Structural analysis of Arabidopsis thaliana chromosome 3. II. Sequence features of the 4,251,695 bp regions covered by 90 P1, TAC and BAC clones.</title>
        <authorList>
            <person name="Kaneko T."/>
            <person name="Katoh T."/>
            <person name="Sato S."/>
            <person name="Nakamura Y."/>
            <person name="Asamizu E."/>
            <person name="Tabata S."/>
        </authorList>
    </citation>
    <scope>NUCLEOTIDE SEQUENCE [LARGE SCALE GENOMIC DNA]</scope>
    <source>
        <strain>cv. Columbia</strain>
    </source>
</reference>
<reference key="4">
    <citation type="journal article" date="2017" name="Plant J.">
        <title>Araport11: a complete reannotation of the Arabidopsis thaliana reference genome.</title>
        <authorList>
            <person name="Cheng C.Y."/>
            <person name="Krishnakumar V."/>
            <person name="Chan A.P."/>
            <person name="Thibaud-Nissen F."/>
            <person name="Schobel S."/>
            <person name="Town C.D."/>
        </authorList>
    </citation>
    <scope>GENOME REANNOTATION</scope>
    <source>
        <strain>cv. Columbia</strain>
    </source>
</reference>
<reference key="5">
    <citation type="journal article" date="2006" name="Genetics">
        <title>Involvement of the Arabidopsis SWI2/SNF2 chromatin remodeling gene family in DNA damage response and recombination.</title>
        <authorList>
            <person name="Shaked H."/>
            <person name="Avivi-Ragolsky N."/>
            <person name="Levy A.A."/>
        </authorList>
    </citation>
    <scope>FUNCTION</scope>
    <scope>DISRUPTION PHENOTYPE</scope>
    <scope>GENE FAMILY</scope>
    <scope>NOMENCLATURE</scope>
</reference>
<reference key="6">
    <citation type="journal article" date="2010" name="Mutat. Res.">
        <title>Genotoxicity/mutagenicity of formaldehyde revealed by the Arabidopsis thaliana plants transgenic for homologous recombination substrates.</title>
        <authorList>
            <person name="Li F."/>
            <person name="Liu P."/>
            <person name="Wang T."/>
            <person name="Bian P."/>
            <person name="Wu Y."/>
            <person name="Wu L."/>
            <person name="Yu Z."/>
        </authorList>
    </citation>
    <scope>INDUCTION BY FORMALDEHYDE</scope>
</reference>
<reference key="7">
    <citation type="journal article" date="2011" name="Int. J. Radiat. Biol.">
        <title>Abscopal mutagenic effect of low-energy-ions in Arabidopsis thaliana seeds.</title>
        <authorList>
            <person name="Li F."/>
            <person name="Wang T."/>
            <person name="Xu S."/>
            <person name="Yuan H."/>
            <person name="Bian P."/>
            <person name="Wu Y."/>
            <person name="Wu L."/>
            <person name="Yu Z."/>
        </authorList>
    </citation>
    <scope>INDUCTION BY LOW-ENERGY-ION IRRADIATION</scope>
</reference>
<reference key="8">
    <citation type="journal article" date="2012" name="FASEB J.">
        <title>A novel role for RAD54: this host protein modulates geminiviral DNA replication.</title>
        <authorList>
            <person name="Kaliappan K."/>
            <person name="Choudhury N.R."/>
            <person name="Suyal G."/>
            <person name="Mukherjee S.K."/>
        </authorList>
    </citation>
    <scope>FUNCTION</scope>
    <scope>DISRUPTION PHENOTYPE</scope>
    <scope>INTERACTION WITH THE GEMINIVIRUS MUNGBEAN YELLOW MOSAIC VIRUS (MYMV) AND TOMATO LEAF CURL VIRUS (TOLCV) REPLICATION-ASSOCIATED PROTEIN</scope>
    <scope>IDENTIFICATION BY MASS SPECTROMETRY</scope>
    <source>
        <strain>cv. Columbia</strain>
    </source>
</reference>
<reference key="9">
    <citation type="journal article" date="2012" name="Mutat. Res.">
        <title>Homologous recombination in Arabidopsis seeds along the track of energetic carbon ions.</title>
        <authorList>
            <person name="Wang T."/>
            <person name="Li F."/>
            <person name="Liu Q."/>
            <person name="Bian P."/>
            <person name="Wang J."/>
            <person name="Wu Y."/>
            <person name="Wu L."/>
            <person name="Li W."/>
        </authorList>
    </citation>
    <scope>INDUCTION BY HEAVY ION IRRADIATION</scope>
</reference>
<reference key="10">
    <citation type="journal article" date="2012" name="Plant J.">
        <title>The requirement for recombination factors differs considerably between different pathways of homologous double-strand break repair in somatic plant cells.</title>
        <authorList>
            <person name="Roth N."/>
            <person name="Klimesch J."/>
            <person name="Dukowic-Schulze S."/>
            <person name="Pacher M."/>
            <person name="Mannuss A."/>
            <person name="Puchta H."/>
        </authorList>
    </citation>
    <scope>FUNCTION</scope>
    <scope>DISRUPTION PHENOTYPE</scope>
</reference>
<reference key="11">
    <citation type="journal article" date="2013" name="PLoS ONE">
        <title>Genome-wide comparative in silico analysis of the RNA helicase gene family in Zea mays and Glycine max: a comparison with Arabidopsis and Oryza sativa.</title>
        <authorList>
            <person name="Xu R."/>
            <person name="Zhang S."/>
            <person name="Huang J."/>
            <person name="Zheng C."/>
        </authorList>
    </citation>
    <scope>GENE FAMILY</scope>
</reference>
<gene>
    <name type="primary">CHR25</name>
    <name evidence="14" type="synonym">RAD54</name>
    <name evidence="16" type="ordered locus">At3g19210</name>
    <name evidence="17" type="ORF">MVI11.13</name>
</gene>
<evidence type="ECO:0000250" key="1">
    <source>
        <dbReference type="UniProtKB" id="P32863"/>
    </source>
</evidence>
<evidence type="ECO:0000255" key="2"/>
<evidence type="ECO:0000255" key="3">
    <source>
        <dbReference type="PROSITE-ProRule" id="PRU00541"/>
    </source>
</evidence>
<evidence type="ECO:0000255" key="4">
    <source>
        <dbReference type="PROSITE-ProRule" id="PRU00542"/>
    </source>
</evidence>
<evidence type="ECO:0000256" key="5">
    <source>
        <dbReference type="SAM" id="MobiDB-lite"/>
    </source>
</evidence>
<evidence type="ECO:0000269" key="6">
    <source>
    </source>
</evidence>
<evidence type="ECO:0000269" key="7">
    <source>
    </source>
</evidence>
<evidence type="ECO:0000269" key="8">
    <source>
    </source>
</evidence>
<evidence type="ECO:0000269" key="9">
    <source>
    </source>
</evidence>
<evidence type="ECO:0000269" key="10">
    <source>
    </source>
</evidence>
<evidence type="ECO:0000269" key="11">
    <source>
    </source>
</evidence>
<evidence type="ECO:0000269" key="12">
    <source>
    </source>
</evidence>
<evidence type="ECO:0000269" key="13">
    <source>
    </source>
</evidence>
<evidence type="ECO:0000303" key="14">
    <source>
    </source>
</evidence>
<evidence type="ECO:0000305" key="15"/>
<evidence type="ECO:0000312" key="16">
    <source>
        <dbReference type="Araport" id="AT3G19210"/>
    </source>
</evidence>
<evidence type="ECO:0000312" key="17">
    <source>
        <dbReference type="EMBL" id="BAB02963.1"/>
    </source>
</evidence>
<evidence type="ECO:0000312" key="18">
    <source>
        <dbReference type="EMBL" id="BAF03042.1"/>
    </source>
</evidence>
<comment type="function">
    <text evidence="1 6 7 8 13">Dissociates RAD51 from nucleoprotein filaments formed on dsDNA. Could be involved in the turnover of RAD51 protein-dsDNA filaments. Addition of RAD54 overcomes inhibition of DNA strand exchange by RAD51 bound to substrate dsDNA. Species preference in the RAD51 dissociation and DNA strand exchange assays underlines the importance of specific RAD54-RAD51 interactions. RAD51 is unable to release dsDNA upon ATP hydrolysis, leaving it stuck on the heteroduplex DNA product after DNA strand exchange (By similarity). Involved in DNA repair and mitotic recombination (PubMed:16547115, PubMed:17227544, PubMed:18430956). Functions in the homologous recombinational DNA repair (RAD52) pathway (PubMed:16547115, PubMed:17227544, PubMed:18430956). Required for synthesis-dependent strand annealing (SDSA) during double-strand break repair (PubMed:22860689).</text>
</comment>
<comment type="function">
    <text evidence="11">Facilitates geminiviral replication (e.g. geminivirus mungbean yellow mosaic virus (MYMV) and tomato leaf curl virus (ToLCV)).</text>
</comment>
<comment type="subunit">
    <text evidence="7 8 11">Interacts with RAD51 (PubMed:17227544, PubMed:18430956). Binds to the geminivirus mungbean yellow mosaic virus (MYMV) and to the tomato leaf curl virus (ToLCV) replication-associated proteins (PubMed:22171001).</text>
</comment>
<comment type="interaction">
    <interactant intactId="EBI-1768899">
        <id>Q0PCS3</id>
    </interactant>
    <interactant intactId="EBI-307687">
        <id>P94102</id>
        <label>RAD51</label>
    </interactant>
    <organismsDiffer>false</organismsDiffer>
    <experiments>3</experiments>
</comment>
<comment type="subcellular location">
    <subcellularLocation>
        <location evidence="1">Nucleus</location>
    </subcellularLocation>
</comment>
<comment type="alternative products">
    <event type="alternative splicing"/>
    <isoform>
        <id>Q0PCS3-1</id>
        <name>1</name>
        <sequence type="displayed"/>
    </isoform>
    <isoform>
        <id>Q0PCS3-2</id>
        <name>2</name>
        <sequence type="described" ref="VSP_057104"/>
    </isoform>
</comment>
<comment type="tissue specificity">
    <text evidence="7">Expressed ubiquitously, with the highest levels of expression in flower buds. Present in flower buds (at protein level).</text>
</comment>
<comment type="induction">
    <text evidence="7 9 10 12">Induced by gamma-irradiation and by heavy ion irradiation (PubMed:17227544, PubMed:22683605). Induced by the genotoxic formaldehyde (FA) (PubMed:20399886). Accumulates in aerial part of low-energy-ion irradiated dormant plant seeds, thus revealing an abscopal mutagenic effect (PubMed:21557702).</text>
</comment>
<comment type="disruption phenotype">
    <text evidence="6 7 11 13">Increased sensitivity to gamma-irradiation and to the cross-linking reagent cisplatin (PubMed:17227544). Reduced efficiency of somatic homologous recombination (HR) (PubMed:16547115, PubMed:17227544). Reduced synthesis-dependent strand annealing (SDSA) frequency (PubMed:22860689). Impaired geminiviral replication (e.g. tomato leaf curl virus (ToLCV)) (PubMed:22171001).</text>
</comment>
<comment type="similarity">
    <text evidence="15">Belongs to the SNF2/RAD54 helicase family.</text>
</comment>
<comment type="sequence caution">
    <conflict type="erroneous gene model prediction">
        <sequence resource="EMBL-CDS" id="BAB02963"/>
    </conflict>
</comment>
<sequence>MEEEDEEILSSSDCDDSSDSYKDDSQDSEGENDNPECEDLAVVSLSSDADRKSKNVKDLLRGNLVVQRQPLLPRVLSVSDGAAVCRKPFKPPCSHGYDSTGQLSRRLSARKRFVPWGSSTPVVVALPTKLEASTNIERDEEEEVVCLPPDIEPLVLWQSEEDGMSNVTTIMVHSVLVKFLRPHQREGVQFMFDCVSGLHGSANINGCILADDMGLGKTLQSITLLYTLLCQGFDGTPMVKKAIIVTPTSLVSNWEAEIKKWVGDRIQLIALCESTRDDVLSGIDSFTRPRSALQVLIISYETFRMHSSKFCQSESCDLLICDEAHRLKNDQTLTNRALASLTCKRRVLLSGTPMQNDLEEFFAMVNFTNPGSLGDAAHFRHYYEAPIICGREPTATEEEKNLAADRSAELSSKVNQFILRRTNALLSNHLPPKIIEVVCCKMTTLQSTLYNHFISSKNLKRALADNAKQTKVLAYITALKKLCNHPKLIYDTIKSGNPGTVGFENCLEFFPAEMFSGRSGAWTGGDGAWVELSGKMHVLSRLLANLRRKTDDRIVLVSNYTQTLDLFAQLCRERRYPFLRLDGSTTISKRQKLVNRLNDPTKDEFAFLLSSKAGGCGLNLIGANRLVLFDPDWNPANDKQAAARVWRDGQKKRVYVYRFLSTGTIEEKVYQRQMSKEGLQKVIQHEQTDNSTRQGNLLSTEDLRDLFSFHGDVRSEIHEKMSCSRCQNDASGTENIEEGNENNVDDNACQIDQEDIGGFAKDAGCFNLLKNSERQVGTPLEEDLGSWGHHFTSKSVPDAILQASAGDEVTFVFTNQVDGKLVPIESNVSPKTVESEEHNRNQPVNKRAFNKPQQRPREPLQPLSLNETTKRVKLSTYKRLHGNSNIDDAQIKMSLQRPNLVSVNHDDDFV</sequence>
<keyword id="KW-0025">Alternative splicing</keyword>
<keyword id="KW-0067">ATP-binding</keyword>
<keyword id="KW-0131">Cell cycle</keyword>
<keyword id="KW-0132">Cell division</keyword>
<keyword id="KW-0175">Coiled coil</keyword>
<keyword id="KW-0227">DNA damage</keyword>
<keyword id="KW-0234">DNA repair</keyword>
<keyword id="KW-0238">DNA-binding</keyword>
<keyword id="KW-0347">Helicase</keyword>
<keyword id="KW-0945">Host-virus interaction</keyword>
<keyword id="KW-0378">Hydrolase</keyword>
<keyword id="KW-0498">Mitosis</keyword>
<keyword id="KW-0547">Nucleotide-binding</keyword>
<keyword id="KW-0539">Nucleus</keyword>
<keyword id="KW-1185">Reference proteome</keyword>